<proteinExistence type="inferred from homology"/>
<dbReference type="EC" id="2.7.4.8" evidence="1"/>
<dbReference type="EMBL" id="CP000075">
    <property type="protein sequence ID" value="AAY35284.1"/>
    <property type="molecule type" value="Genomic_DNA"/>
</dbReference>
<dbReference type="RefSeq" id="WP_003392601.1">
    <property type="nucleotide sequence ID" value="NC_007005.1"/>
</dbReference>
<dbReference type="RefSeq" id="YP_233322.1">
    <property type="nucleotide sequence ID" value="NC_007005.1"/>
</dbReference>
<dbReference type="SMR" id="Q4ZZY8"/>
<dbReference type="STRING" id="205918.Psyr_0211"/>
<dbReference type="KEGG" id="psb:Psyr_0211"/>
<dbReference type="PATRIC" id="fig|205918.7.peg.208"/>
<dbReference type="eggNOG" id="COG0194">
    <property type="taxonomic scope" value="Bacteria"/>
</dbReference>
<dbReference type="HOGENOM" id="CLU_001715_1_0_6"/>
<dbReference type="OrthoDB" id="9808150at2"/>
<dbReference type="Proteomes" id="UP000000426">
    <property type="component" value="Chromosome"/>
</dbReference>
<dbReference type="GO" id="GO:0005829">
    <property type="term" value="C:cytosol"/>
    <property type="evidence" value="ECO:0007669"/>
    <property type="project" value="TreeGrafter"/>
</dbReference>
<dbReference type="GO" id="GO:0005524">
    <property type="term" value="F:ATP binding"/>
    <property type="evidence" value="ECO:0007669"/>
    <property type="project" value="UniProtKB-UniRule"/>
</dbReference>
<dbReference type="GO" id="GO:0004385">
    <property type="term" value="F:guanylate kinase activity"/>
    <property type="evidence" value="ECO:0007669"/>
    <property type="project" value="UniProtKB-UniRule"/>
</dbReference>
<dbReference type="CDD" id="cd00071">
    <property type="entry name" value="GMPK"/>
    <property type="match status" value="1"/>
</dbReference>
<dbReference type="FunFam" id="3.40.50.300:FF:000855">
    <property type="entry name" value="Guanylate kinase"/>
    <property type="match status" value="1"/>
</dbReference>
<dbReference type="FunFam" id="3.30.63.10:FF:000002">
    <property type="entry name" value="Guanylate kinase 1"/>
    <property type="match status" value="1"/>
</dbReference>
<dbReference type="Gene3D" id="3.30.63.10">
    <property type="entry name" value="Guanylate Kinase phosphate binding domain"/>
    <property type="match status" value="1"/>
</dbReference>
<dbReference type="Gene3D" id="3.40.50.300">
    <property type="entry name" value="P-loop containing nucleotide triphosphate hydrolases"/>
    <property type="match status" value="1"/>
</dbReference>
<dbReference type="HAMAP" id="MF_00328">
    <property type="entry name" value="Guanylate_kinase"/>
    <property type="match status" value="1"/>
</dbReference>
<dbReference type="InterPro" id="IPR008145">
    <property type="entry name" value="GK/Ca_channel_bsu"/>
</dbReference>
<dbReference type="InterPro" id="IPR008144">
    <property type="entry name" value="Guanylate_kin-like_dom"/>
</dbReference>
<dbReference type="InterPro" id="IPR017665">
    <property type="entry name" value="Guanylate_kinase"/>
</dbReference>
<dbReference type="InterPro" id="IPR020590">
    <property type="entry name" value="Guanylate_kinase_CS"/>
</dbReference>
<dbReference type="InterPro" id="IPR027417">
    <property type="entry name" value="P-loop_NTPase"/>
</dbReference>
<dbReference type="NCBIfam" id="TIGR03263">
    <property type="entry name" value="guanyl_kin"/>
    <property type="match status" value="1"/>
</dbReference>
<dbReference type="PANTHER" id="PTHR23117:SF13">
    <property type="entry name" value="GUANYLATE KINASE"/>
    <property type="match status" value="1"/>
</dbReference>
<dbReference type="PANTHER" id="PTHR23117">
    <property type="entry name" value="GUANYLATE KINASE-RELATED"/>
    <property type="match status" value="1"/>
</dbReference>
<dbReference type="Pfam" id="PF00625">
    <property type="entry name" value="Guanylate_kin"/>
    <property type="match status" value="1"/>
</dbReference>
<dbReference type="SMART" id="SM00072">
    <property type="entry name" value="GuKc"/>
    <property type="match status" value="1"/>
</dbReference>
<dbReference type="SUPFAM" id="SSF52540">
    <property type="entry name" value="P-loop containing nucleoside triphosphate hydrolases"/>
    <property type="match status" value="1"/>
</dbReference>
<dbReference type="PROSITE" id="PS00856">
    <property type="entry name" value="GUANYLATE_KINASE_1"/>
    <property type="match status" value="1"/>
</dbReference>
<dbReference type="PROSITE" id="PS50052">
    <property type="entry name" value="GUANYLATE_KINASE_2"/>
    <property type="match status" value="1"/>
</dbReference>
<accession>Q4ZZY8</accession>
<gene>
    <name evidence="1" type="primary">gmk</name>
    <name type="ordered locus">Psyr_0211</name>
</gene>
<reference key="1">
    <citation type="journal article" date="2005" name="Proc. Natl. Acad. Sci. U.S.A.">
        <title>Comparison of the complete genome sequences of Pseudomonas syringae pv. syringae B728a and pv. tomato DC3000.</title>
        <authorList>
            <person name="Feil H."/>
            <person name="Feil W.S."/>
            <person name="Chain P."/>
            <person name="Larimer F."/>
            <person name="Dibartolo G."/>
            <person name="Copeland A."/>
            <person name="Lykidis A."/>
            <person name="Trong S."/>
            <person name="Nolan M."/>
            <person name="Goltsman E."/>
            <person name="Thiel J."/>
            <person name="Malfatti S."/>
            <person name="Loper J.E."/>
            <person name="Lapidus A."/>
            <person name="Detter J.C."/>
            <person name="Land M."/>
            <person name="Richardson P.M."/>
            <person name="Kyrpides N.C."/>
            <person name="Ivanova N."/>
            <person name="Lindow S.E."/>
        </authorList>
    </citation>
    <scope>NUCLEOTIDE SEQUENCE [LARGE SCALE GENOMIC DNA]</scope>
    <source>
        <strain>B728a</strain>
    </source>
</reference>
<keyword id="KW-0067">ATP-binding</keyword>
<keyword id="KW-0963">Cytoplasm</keyword>
<keyword id="KW-0418">Kinase</keyword>
<keyword id="KW-0547">Nucleotide-binding</keyword>
<keyword id="KW-0808">Transferase</keyword>
<name>KGUA_PSEU2</name>
<evidence type="ECO:0000255" key="1">
    <source>
        <dbReference type="HAMAP-Rule" id="MF_00328"/>
    </source>
</evidence>
<sequence>MTHITGTLYIISAPSGAGKTSLVKALMDAQQEPQHGAQAKIRVSVSHTTRAMRPGEVDGVNYNFVDRATFLSMIEHGDFLEQAEVFGNLYGTSQSHLQQTLDEGHDLILEIDWQGARQVRAQMPQARSIFILPPTQQALRQRLTNRGQDSDEIIEARMREAVSEMSHYSEYEYVVVNDDFAGALEDLKAIFRANRLTQQHQQEQYSELFQELLA</sequence>
<protein>
    <recommendedName>
        <fullName evidence="1">Guanylate kinase</fullName>
        <ecNumber evidence="1">2.7.4.8</ecNumber>
    </recommendedName>
    <alternativeName>
        <fullName evidence="1">GMP kinase</fullName>
    </alternativeName>
</protein>
<comment type="function">
    <text evidence="1">Essential for recycling GMP and indirectly, cGMP.</text>
</comment>
<comment type="catalytic activity">
    <reaction evidence="1">
        <text>GMP + ATP = GDP + ADP</text>
        <dbReference type="Rhea" id="RHEA:20780"/>
        <dbReference type="ChEBI" id="CHEBI:30616"/>
        <dbReference type="ChEBI" id="CHEBI:58115"/>
        <dbReference type="ChEBI" id="CHEBI:58189"/>
        <dbReference type="ChEBI" id="CHEBI:456216"/>
        <dbReference type="EC" id="2.7.4.8"/>
    </reaction>
</comment>
<comment type="subcellular location">
    <subcellularLocation>
        <location evidence="1">Cytoplasm</location>
    </subcellularLocation>
</comment>
<comment type="similarity">
    <text evidence="1">Belongs to the guanylate kinase family.</text>
</comment>
<feature type="chain" id="PRO_0000266374" description="Guanylate kinase">
    <location>
        <begin position="1"/>
        <end position="214"/>
    </location>
</feature>
<feature type="domain" description="Guanylate kinase-like" evidence="1">
    <location>
        <begin position="6"/>
        <end position="192"/>
    </location>
</feature>
<feature type="binding site" evidence="1">
    <location>
        <begin position="13"/>
        <end position="20"/>
    </location>
    <ligand>
        <name>ATP</name>
        <dbReference type="ChEBI" id="CHEBI:30616"/>
    </ligand>
</feature>
<organism>
    <name type="scientific">Pseudomonas syringae pv. syringae (strain B728a)</name>
    <dbReference type="NCBI Taxonomy" id="205918"/>
    <lineage>
        <taxon>Bacteria</taxon>
        <taxon>Pseudomonadati</taxon>
        <taxon>Pseudomonadota</taxon>
        <taxon>Gammaproteobacteria</taxon>
        <taxon>Pseudomonadales</taxon>
        <taxon>Pseudomonadaceae</taxon>
        <taxon>Pseudomonas</taxon>
        <taxon>Pseudomonas syringae</taxon>
    </lineage>
</organism>